<accession>A2RRU3</accession>
<evidence type="ECO:0000250" key="1">
    <source>
        <dbReference type="UniProtKB" id="Q8TED0"/>
    </source>
</evidence>
<evidence type="ECO:0000255" key="2"/>
<evidence type="ECO:0000256" key="3">
    <source>
        <dbReference type="SAM" id="MobiDB-lite"/>
    </source>
</evidence>
<evidence type="ECO:0000312" key="4">
    <source>
        <dbReference type="EMBL" id="AAI31852.1"/>
    </source>
</evidence>
<sequence>MAGYKPVVIQTYPVLGEKITQDTLYWNNYKTPVQIKEFGAVSKVDFSPQPPYNYAVTASSRIHIYGRYSQEPVKTFSRFKDTAYCATFRQDGQLLVAGSEDGVVQLFDISGRAPLRQFEGHTKAVHTVDFTADKYHVVSGADDYTVKLWDIPNSKEILTFKEHSDYVRCGCASKLNPDLFVTGSYDHTVKMFDARTNKNVLCVEHGQPVESVLLFPSGGLLVSAGGRYVKVWDMLKGGQLLVSLKNHHKTVTCLCLSSSGQRLLSGSLDRKVKIYSTTSYKVVHSFDYAASILSLALSHQDETVVVGMTNGILSVKHRKSEAKKESLPRRRRPAYRTFIKGKIYTKQRDDIVVTRPAKKHLEWYDRDLKSFRISKALDRVLEPNCVIKTPEVTVSIIKELNRRGVLANALAGRDEKEITRVLNFLIRNLSQPRFAPVLINAAEIIIDIYLPVIGQSSVVDKKFIVLQGLVEKEIDYQRELLETLGMMDMLFATMTRNGSAPVWEHVPAELPEEKTESPRQPSDTDKNS</sequence>
<feature type="initiator methionine" description="Removed" evidence="1">
    <location>
        <position position="1"/>
    </location>
</feature>
<feature type="chain" id="PRO_0000314596" description="U3 small nucleolar RNA-associated protein 15 homolog">
    <location>
        <begin position="2"/>
        <end position="528"/>
    </location>
</feature>
<feature type="repeat" description="WD 1" evidence="2">
    <location>
        <begin position="36"/>
        <end position="75"/>
    </location>
</feature>
<feature type="repeat" description="WD 2" evidence="2">
    <location>
        <begin position="78"/>
        <end position="117"/>
    </location>
</feature>
<feature type="repeat" description="WD 3" evidence="2">
    <location>
        <begin position="120"/>
        <end position="159"/>
    </location>
</feature>
<feature type="repeat" description="WD 4" evidence="2">
    <location>
        <begin position="162"/>
        <end position="202"/>
    </location>
</feature>
<feature type="repeat" description="WD 5" evidence="2">
    <location>
        <begin position="204"/>
        <end position="242"/>
    </location>
</feature>
<feature type="repeat" description="WD 6" evidence="2">
    <location>
        <begin position="246"/>
        <end position="285"/>
    </location>
</feature>
<feature type="repeat" description="WD 7" evidence="2">
    <location>
        <begin position="287"/>
        <end position="326"/>
    </location>
</feature>
<feature type="region of interest" description="Disordered" evidence="3">
    <location>
        <begin position="508"/>
        <end position="528"/>
    </location>
</feature>
<feature type="compositionally biased region" description="Basic and acidic residues" evidence="3">
    <location>
        <begin position="511"/>
        <end position="528"/>
    </location>
</feature>
<feature type="modified residue" description="N-acetylalanine" evidence="1">
    <location>
        <position position="2"/>
    </location>
</feature>
<feature type="cross-link" description="Glycyl lysine isopeptide (Lys-Gly) (interchain with G-Cter in SUMO2)" evidence="1">
    <location>
        <position position="249"/>
    </location>
</feature>
<dbReference type="EMBL" id="BC131851">
    <property type="protein sequence ID" value="AAI31852.1"/>
    <property type="molecule type" value="mRNA"/>
</dbReference>
<dbReference type="RefSeq" id="NP_001101117.1">
    <property type="nucleotide sequence ID" value="NM_001107647.2"/>
</dbReference>
<dbReference type="RefSeq" id="XP_006231898.1">
    <property type="nucleotide sequence ID" value="XM_006231836.3"/>
</dbReference>
<dbReference type="RefSeq" id="XP_008758893.1">
    <property type="nucleotide sequence ID" value="XM_008760671.2"/>
</dbReference>
<dbReference type="RefSeq" id="XP_008758894.1">
    <property type="nucleotide sequence ID" value="XM_008760672.2"/>
</dbReference>
<dbReference type="RefSeq" id="XP_008758895.1">
    <property type="nucleotide sequence ID" value="XM_008760673.2"/>
</dbReference>
<dbReference type="RefSeq" id="XP_038958098.1">
    <property type="nucleotide sequence ID" value="XM_039102170.2"/>
</dbReference>
<dbReference type="RefSeq" id="XP_063137788.1">
    <property type="nucleotide sequence ID" value="XM_063281718.1"/>
</dbReference>
<dbReference type="SMR" id="A2RRU3"/>
<dbReference type="FunCoup" id="A2RRU3">
    <property type="interactions" value="2892"/>
</dbReference>
<dbReference type="STRING" id="10116.ENSRNOP00000022259"/>
<dbReference type="GlyGen" id="A2RRU3">
    <property type="glycosylation" value="1 site"/>
</dbReference>
<dbReference type="PhosphoSitePlus" id="A2RRU3"/>
<dbReference type="jPOST" id="A2RRU3"/>
<dbReference type="PaxDb" id="10116-ENSRNOP00000022259"/>
<dbReference type="PeptideAtlas" id="A2RRU3"/>
<dbReference type="Ensembl" id="ENSRNOT00000022259.8">
    <property type="protein sequence ID" value="ENSRNOP00000022259.5"/>
    <property type="gene ID" value="ENSRNOG00000016591.8"/>
</dbReference>
<dbReference type="GeneID" id="310019"/>
<dbReference type="KEGG" id="rno:310019"/>
<dbReference type="UCSC" id="RGD:1310992">
    <property type="organism name" value="rat"/>
</dbReference>
<dbReference type="AGR" id="RGD:1310992"/>
<dbReference type="CTD" id="84135"/>
<dbReference type="RGD" id="1310992">
    <property type="gene designation" value="Utp15"/>
</dbReference>
<dbReference type="eggNOG" id="KOG0267">
    <property type="taxonomic scope" value="Eukaryota"/>
</dbReference>
<dbReference type="eggNOG" id="KOG0310">
    <property type="taxonomic scope" value="Eukaryota"/>
</dbReference>
<dbReference type="GeneTree" id="ENSGT00390000004228"/>
<dbReference type="HOGENOM" id="CLU_021102_4_1_1"/>
<dbReference type="InParanoid" id="A2RRU3"/>
<dbReference type="OMA" id="ATYQVVH"/>
<dbReference type="OrthoDB" id="431715at2759"/>
<dbReference type="PhylomeDB" id="A2RRU3"/>
<dbReference type="TreeFam" id="TF319494"/>
<dbReference type="Reactome" id="R-RNO-6791226">
    <property type="pathway name" value="Major pathway of rRNA processing in the nucleolus and cytosol"/>
</dbReference>
<dbReference type="PRO" id="PR:A2RRU3"/>
<dbReference type="Proteomes" id="UP000002494">
    <property type="component" value="Chromosome 2"/>
</dbReference>
<dbReference type="Bgee" id="ENSRNOG00000016591">
    <property type="expression patterns" value="Expressed in thymus and 18 other cell types or tissues"/>
</dbReference>
<dbReference type="GO" id="GO:0005783">
    <property type="term" value="C:endoplasmic reticulum"/>
    <property type="evidence" value="ECO:0007669"/>
    <property type="project" value="Ensembl"/>
</dbReference>
<dbReference type="GO" id="GO:0001650">
    <property type="term" value="C:fibrillar center"/>
    <property type="evidence" value="ECO:0000250"/>
    <property type="project" value="UniProtKB"/>
</dbReference>
<dbReference type="GO" id="GO:0005730">
    <property type="term" value="C:nucleolus"/>
    <property type="evidence" value="ECO:0000250"/>
    <property type="project" value="UniProtKB"/>
</dbReference>
<dbReference type="GO" id="GO:0032040">
    <property type="term" value="C:small-subunit processome"/>
    <property type="evidence" value="ECO:0000250"/>
    <property type="project" value="UniProtKB"/>
</dbReference>
<dbReference type="GO" id="GO:2000234">
    <property type="term" value="P:positive regulation of rRNA processing"/>
    <property type="evidence" value="ECO:0000266"/>
    <property type="project" value="RGD"/>
</dbReference>
<dbReference type="GO" id="GO:0045943">
    <property type="term" value="P:positive regulation of transcription by RNA polymerase I"/>
    <property type="evidence" value="ECO:0000266"/>
    <property type="project" value="RGD"/>
</dbReference>
<dbReference type="GO" id="GO:0042274">
    <property type="term" value="P:ribosomal small subunit biogenesis"/>
    <property type="evidence" value="ECO:0000250"/>
    <property type="project" value="UniProtKB"/>
</dbReference>
<dbReference type="GO" id="GO:0006364">
    <property type="term" value="P:rRNA processing"/>
    <property type="evidence" value="ECO:0000318"/>
    <property type="project" value="GO_Central"/>
</dbReference>
<dbReference type="CDD" id="cd00200">
    <property type="entry name" value="WD40"/>
    <property type="match status" value="1"/>
</dbReference>
<dbReference type="FunFam" id="2.130.10.10:FF:000398">
    <property type="entry name" value="U3 small nucleolar RNA-associated protein 15 homolog"/>
    <property type="match status" value="1"/>
</dbReference>
<dbReference type="FunFam" id="2.130.10.10:FF:000448">
    <property type="entry name" value="U3 small nucleolar RNA-associated protein 15 homolog"/>
    <property type="match status" value="1"/>
</dbReference>
<dbReference type="Gene3D" id="2.130.10.10">
    <property type="entry name" value="YVTN repeat-like/Quinoprotein amine dehydrogenase"/>
    <property type="match status" value="1"/>
</dbReference>
<dbReference type="InterPro" id="IPR018983">
    <property type="entry name" value="U3_snoRNA-assocProt_15_C"/>
</dbReference>
<dbReference type="InterPro" id="IPR015943">
    <property type="entry name" value="WD40/YVTN_repeat-like_dom_sf"/>
</dbReference>
<dbReference type="InterPro" id="IPR019775">
    <property type="entry name" value="WD40_repeat_CS"/>
</dbReference>
<dbReference type="InterPro" id="IPR036322">
    <property type="entry name" value="WD40_repeat_dom_sf"/>
</dbReference>
<dbReference type="InterPro" id="IPR001680">
    <property type="entry name" value="WD40_rpt"/>
</dbReference>
<dbReference type="PANTHER" id="PTHR19924:SF26">
    <property type="entry name" value="U3 SMALL NUCLEOLAR RNA-ASSOCIATED PROTEIN 15 HOMOLOG"/>
    <property type="match status" value="1"/>
</dbReference>
<dbReference type="PANTHER" id="PTHR19924">
    <property type="entry name" value="UTP15 U3 SMALL NUCLEOLAR RNA-ASSOCIATED PROTEIN 15 FAMILY MEMBER"/>
    <property type="match status" value="1"/>
</dbReference>
<dbReference type="Pfam" id="PF09384">
    <property type="entry name" value="UTP15_C"/>
    <property type="match status" value="1"/>
</dbReference>
<dbReference type="Pfam" id="PF00400">
    <property type="entry name" value="WD40"/>
    <property type="match status" value="5"/>
</dbReference>
<dbReference type="SMART" id="SM00320">
    <property type="entry name" value="WD40"/>
    <property type="match status" value="7"/>
</dbReference>
<dbReference type="SUPFAM" id="SSF50978">
    <property type="entry name" value="WD40 repeat-like"/>
    <property type="match status" value="1"/>
</dbReference>
<dbReference type="PROSITE" id="PS00678">
    <property type="entry name" value="WD_REPEATS_1"/>
    <property type="match status" value="1"/>
</dbReference>
<dbReference type="PROSITE" id="PS50082">
    <property type="entry name" value="WD_REPEATS_2"/>
    <property type="match status" value="2"/>
</dbReference>
<dbReference type="PROSITE" id="PS50294">
    <property type="entry name" value="WD_REPEATS_REGION"/>
    <property type="match status" value="1"/>
</dbReference>
<keyword id="KW-0007">Acetylation</keyword>
<keyword id="KW-1017">Isopeptide bond</keyword>
<keyword id="KW-0539">Nucleus</keyword>
<keyword id="KW-1185">Reference proteome</keyword>
<keyword id="KW-0677">Repeat</keyword>
<keyword id="KW-0698">rRNA processing</keyword>
<keyword id="KW-0832">Ubl conjugation</keyword>
<keyword id="KW-0853">WD repeat</keyword>
<reference evidence="4" key="1">
    <citation type="journal article" date="2004" name="Genome Res.">
        <title>The status, quality, and expansion of the NIH full-length cDNA project: the Mammalian Gene Collection (MGC).</title>
        <authorList>
            <consortium name="The MGC Project Team"/>
        </authorList>
    </citation>
    <scope>NUCLEOTIDE SEQUENCE [LARGE SCALE MRNA]</scope>
    <source>
        <tissue evidence="4">Heart</tissue>
    </source>
</reference>
<name>UTP15_RAT</name>
<organism>
    <name type="scientific">Rattus norvegicus</name>
    <name type="common">Rat</name>
    <dbReference type="NCBI Taxonomy" id="10116"/>
    <lineage>
        <taxon>Eukaryota</taxon>
        <taxon>Metazoa</taxon>
        <taxon>Chordata</taxon>
        <taxon>Craniata</taxon>
        <taxon>Vertebrata</taxon>
        <taxon>Euteleostomi</taxon>
        <taxon>Mammalia</taxon>
        <taxon>Eutheria</taxon>
        <taxon>Euarchontoglires</taxon>
        <taxon>Glires</taxon>
        <taxon>Rodentia</taxon>
        <taxon>Myomorpha</taxon>
        <taxon>Muroidea</taxon>
        <taxon>Muridae</taxon>
        <taxon>Murinae</taxon>
        <taxon>Rattus</taxon>
    </lineage>
</organism>
<proteinExistence type="evidence at transcript level"/>
<gene>
    <name evidence="1" type="primary">Utp15</name>
</gene>
<protein>
    <recommendedName>
        <fullName>U3 small nucleolar RNA-associated protein 15 homolog</fullName>
    </recommendedName>
</protein>
<comment type="function">
    <text evidence="1">Ribosome biogenesis factor. Involved in nucleolar processing of pre-18S ribosomal RNA. Required for optimal pre-ribosomal RNA transcription by RNA polymerase I. Part of the small subunit (SSU) processome, first precursor of the small eukaryotic ribosomal subunit. During the assembly of the SSU processome in the nucleolus, many ribosome biogenesis factors, an RNA chaperone and ribosomal proteins associate with the nascent pre-rRNA and work in concert to generate RNA folding, modifications, rearrangements and cleavage as well as targeted degradation of pre-ribosomal RNA by the RNA exosome.</text>
</comment>
<comment type="subunit">
    <text evidence="1">Part of the small subunit (SSU) processome, composed of more than 70 proteins and the RNA chaperone small nucleolar RNA (snoRNA) U3. May be a component of the proposed t-UTP subcomplex of the ribosomal small subunit (SSU) processome containing at least UTP4, WDR43, HEATR1, UTP15, WDR75. Interacts directly with UTP4 and WDR43.</text>
</comment>
<comment type="subcellular location">
    <subcellularLocation>
        <location evidence="1">Nucleus</location>
        <location evidence="1">Nucleolus</location>
    </subcellularLocation>
    <text evidence="1">Found predominantly at the fibrillar center.</text>
</comment>